<comment type="induction">
    <text evidence="3">Up-regulated in the leaf sheaths of rice plants grown from seeds that were inoculated with the nonpathogenic P.fluorescens strain KH-1.</text>
</comment>
<comment type="mass spectrometry" mass="27458.0" method="Electrospray" evidence="3"/>
<comment type="similarity">
    <text evidence="4">Belongs to the GST superfamily. HSP26 family.</text>
</comment>
<name>IN21B_ORYSI</name>
<gene>
    <name type="primary">GSTZ5</name>
</gene>
<reference key="1">
    <citation type="submission" date="2005-12" db="EMBL/GenBank/DDBJ databases">
        <title>Genomic structure and over expression of two tandem-arranged GSTZ genes in rice.</title>
        <authorList>
            <person name="Hu T."/>
            <person name="Cao K."/>
            <person name="Wang X."/>
        </authorList>
    </citation>
    <scope>NUCLEOTIDE SEQUENCE [MRNA]</scope>
</reference>
<reference key="2">
    <citation type="journal article" date="2009" name="Proteome Sci.">
        <title>Understanding the molecular basis of plant growth promotional effect of Pseudomonas fluorescens on rice through protein profiling.</title>
        <authorList>
            <person name="Kandasamy S."/>
            <person name="Loganathan K."/>
            <person name="Muthuraj R."/>
            <person name="Duraisamy S."/>
            <person name="Seetharaman S."/>
            <person name="Thiruvengadam R."/>
            <person name="Ponnusamy B."/>
            <person name="Ramasamy S."/>
        </authorList>
    </citation>
    <scope>IDENTIFICATION BY MASS SPECTROMETRY</scope>
    <scope>INDUCTION</scope>
    <source>
        <strain>cv. CO43</strain>
        <tissue>Leaf</tissue>
    </source>
</reference>
<feature type="chain" id="PRO_0000361766" description="Protein IN2-1 homolog B">
    <location>
        <begin position="1"/>
        <end position="244"/>
    </location>
</feature>
<feature type="domain" description="GST N-terminal">
    <location>
        <begin position="32"/>
        <end position="113"/>
    </location>
</feature>
<feature type="domain" description="GST C-terminal">
    <location>
        <begin position="118"/>
        <end position="241"/>
    </location>
</feature>
<feature type="region of interest" description="Disordered" evidence="2">
    <location>
        <begin position="1"/>
        <end position="27"/>
    </location>
</feature>
<feature type="binding site" evidence="1">
    <location>
        <position position="85"/>
    </location>
    <ligand>
        <name>glutathione</name>
        <dbReference type="ChEBI" id="CHEBI:57925"/>
    </ligand>
</feature>
<feature type="binding site" evidence="1">
    <location>
        <begin position="97"/>
        <end position="98"/>
    </location>
    <ligand>
        <name>glutathione</name>
        <dbReference type="ChEBI" id="CHEBI:57925"/>
    </ligand>
</feature>
<proteinExistence type="evidence at protein level"/>
<sequence length="244" mass="27361">MAAAAAAPASSEKEVLPPSLTSSSEPPPLFDGTTRLYVAYHCPYAQRAWIARNYKGLQDKIKIVAIDLADRPAWYKEKVYPENKVPSLEHNNQVKGESLDLVKYIDTNFEGPALLPDDSEKQQFAEELLAYTDAFNKASYSSIVAKGDVCDEAVAALDKIEAALSKFNDGPFFLGQFSLVDIAYVPFIERFQIFFSGIKNYDITKGRPNLQKFIEEVNKIHAYTETKQDPQFLLEHTKKRLGIA</sequence>
<accession>A1XBB7</accession>
<organism>
    <name type="scientific">Oryza sativa subsp. indica</name>
    <name type="common">Rice</name>
    <dbReference type="NCBI Taxonomy" id="39946"/>
    <lineage>
        <taxon>Eukaryota</taxon>
        <taxon>Viridiplantae</taxon>
        <taxon>Streptophyta</taxon>
        <taxon>Embryophyta</taxon>
        <taxon>Tracheophyta</taxon>
        <taxon>Spermatophyta</taxon>
        <taxon>Magnoliopsida</taxon>
        <taxon>Liliopsida</taxon>
        <taxon>Poales</taxon>
        <taxon>Poaceae</taxon>
        <taxon>BOP clade</taxon>
        <taxon>Oryzoideae</taxon>
        <taxon>Oryzeae</taxon>
        <taxon>Oryzinae</taxon>
        <taxon>Oryza</taxon>
        <taxon>Oryza sativa</taxon>
    </lineage>
</organism>
<dbReference type="EMBL" id="DQ323738">
    <property type="protein sequence ID" value="ABC74869.1"/>
    <property type="molecule type" value="mRNA"/>
</dbReference>
<dbReference type="SMR" id="A1XBB7"/>
<dbReference type="GO" id="GO:0004364">
    <property type="term" value="F:glutathione transferase activity"/>
    <property type="evidence" value="ECO:0007669"/>
    <property type="project" value="InterPro"/>
</dbReference>
<dbReference type="CDD" id="cd03203">
    <property type="entry name" value="GST_C_Lambda"/>
    <property type="match status" value="1"/>
</dbReference>
<dbReference type="FunFam" id="3.40.30.10:FF:000091">
    <property type="entry name" value="Glutathione S-transferase L2, chloroplastic"/>
    <property type="match status" value="1"/>
</dbReference>
<dbReference type="FunFam" id="1.20.1050.10:FF:000041">
    <property type="entry name" value="Lambda class glutathione S-transferase"/>
    <property type="match status" value="1"/>
</dbReference>
<dbReference type="Gene3D" id="1.20.1050.10">
    <property type="match status" value="1"/>
</dbReference>
<dbReference type="Gene3D" id="3.40.30.10">
    <property type="entry name" value="Glutaredoxin"/>
    <property type="match status" value="1"/>
</dbReference>
<dbReference type="InterPro" id="IPR010987">
    <property type="entry name" value="Glutathione-S-Trfase_C-like"/>
</dbReference>
<dbReference type="InterPro" id="IPR036282">
    <property type="entry name" value="Glutathione-S-Trfase_C_sf"/>
</dbReference>
<dbReference type="InterPro" id="IPR040079">
    <property type="entry name" value="Glutathione_S-Trfase"/>
</dbReference>
<dbReference type="InterPro" id="IPR004045">
    <property type="entry name" value="Glutathione_S-Trfase_N"/>
</dbReference>
<dbReference type="InterPro" id="IPR044629">
    <property type="entry name" value="GSTL1/2/3"/>
</dbReference>
<dbReference type="InterPro" id="IPR036249">
    <property type="entry name" value="Thioredoxin-like_sf"/>
</dbReference>
<dbReference type="PANTHER" id="PTHR44328">
    <property type="entry name" value="GLUTATHIONE S-TRANSFERASE L1"/>
    <property type="match status" value="1"/>
</dbReference>
<dbReference type="PANTHER" id="PTHR44328:SF16">
    <property type="entry name" value="PROTEIN IN2-1 HOMOLOG B"/>
    <property type="match status" value="1"/>
</dbReference>
<dbReference type="Pfam" id="PF13410">
    <property type="entry name" value="GST_C_2"/>
    <property type="match status" value="1"/>
</dbReference>
<dbReference type="Pfam" id="PF13417">
    <property type="entry name" value="GST_N_3"/>
    <property type="match status" value="1"/>
</dbReference>
<dbReference type="SFLD" id="SFLDS00019">
    <property type="entry name" value="Glutathione_Transferase_(cytos"/>
    <property type="match status" value="1"/>
</dbReference>
<dbReference type="SFLD" id="SFLDG00358">
    <property type="entry name" value="Main_(cytGST)"/>
    <property type="match status" value="1"/>
</dbReference>
<dbReference type="SUPFAM" id="SSF47616">
    <property type="entry name" value="GST C-terminal domain-like"/>
    <property type="match status" value="1"/>
</dbReference>
<dbReference type="SUPFAM" id="SSF52833">
    <property type="entry name" value="Thioredoxin-like"/>
    <property type="match status" value="1"/>
</dbReference>
<dbReference type="PROSITE" id="PS50405">
    <property type="entry name" value="GST_CTER"/>
    <property type="match status" value="1"/>
</dbReference>
<dbReference type="PROSITE" id="PS50404">
    <property type="entry name" value="GST_NTER"/>
    <property type="match status" value="1"/>
</dbReference>
<protein>
    <recommendedName>
        <fullName>Protein IN2-1 homolog B</fullName>
    </recommendedName>
    <alternativeName>
        <fullName>Glutathione S-transferase GSTZ5</fullName>
    </alternativeName>
</protein>
<evidence type="ECO:0000250" key="1"/>
<evidence type="ECO:0000256" key="2">
    <source>
        <dbReference type="SAM" id="MobiDB-lite"/>
    </source>
</evidence>
<evidence type="ECO:0000269" key="3">
    <source>
    </source>
</evidence>
<evidence type="ECO:0000305" key="4"/>